<proteinExistence type="inferred from homology"/>
<comment type="function">
    <text evidence="1">Component of the coat protein complex II (COPII) which promotes the formation of transport vesicles from the endoplasmic reticulum (ER). The coat has two main functions, the physical deformation of the endoplasmic reticulum membrane into vesicles and the selection of cargo molecules (By similarity).</text>
</comment>
<comment type="subunit">
    <text evidence="1">The COPII coat is composed of at least 5 proteins: the sec23/24 complex, the sec13/31 complex, and the protein sar1. sec13 and sec31 make a 2:2 tetramer that forms the edge element of the COPII outer coat. The tetramer self-assembles in multiple copies to form the complete polyhedral cage. Interacts (via WD 8) with sec13 (By similarity).</text>
</comment>
<comment type="subcellular location">
    <subcellularLocation>
        <location evidence="1">Cytoplasmic vesicle</location>
        <location evidence="1">COPII-coated vesicle membrane</location>
        <topology evidence="1">Peripheral membrane protein</topology>
        <orientation evidence="1">Cytoplasmic side</orientation>
    </subcellularLocation>
    <subcellularLocation>
        <location evidence="1">Endoplasmic reticulum membrane</location>
        <topology evidence="1">Peripheral membrane protein</topology>
        <orientation evidence="1">Cytoplasmic side</orientation>
    </subcellularLocation>
</comment>
<comment type="similarity">
    <text evidence="4">Belongs to the WD repeat SEC31 family.</text>
</comment>
<accession>Q4X0M4</accession>
<keyword id="KW-0968">Cytoplasmic vesicle</keyword>
<keyword id="KW-0256">Endoplasmic reticulum</keyword>
<keyword id="KW-0931">ER-Golgi transport</keyword>
<keyword id="KW-0472">Membrane</keyword>
<keyword id="KW-0653">Protein transport</keyword>
<keyword id="KW-1185">Reference proteome</keyword>
<keyword id="KW-0677">Repeat</keyword>
<keyword id="KW-0813">Transport</keyword>
<keyword id="KW-0853">WD repeat</keyword>
<organism>
    <name type="scientific">Aspergillus fumigatus (strain ATCC MYA-4609 / CBS 101355 / FGSC A1100 / Af293)</name>
    <name type="common">Neosartorya fumigata</name>
    <dbReference type="NCBI Taxonomy" id="330879"/>
    <lineage>
        <taxon>Eukaryota</taxon>
        <taxon>Fungi</taxon>
        <taxon>Dikarya</taxon>
        <taxon>Ascomycota</taxon>
        <taxon>Pezizomycotina</taxon>
        <taxon>Eurotiomycetes</taxon>
        <taxon>Eurotiomycetidae</taxon>
        <taxon>Eurotiales</taxon>
        <taxon>Aspergillaceae</taxon>
        <taxon>Aspergillus</taxon>
        <taxon>Aspergillus subgen. Fumigati</taxon>
    </lineage>
</organism>
<gene>
    <name type="primary">sec31</name>
    <name type="ORF">AFUA_2G12980</name>
</gene>
<name>SEC31_ASPFU</name>
<evidence type="ECO:0000250" key="1"/>
<evidence type="ECO:0000255" key="2">
    <source>
        <dbReference type="PROSITE-ProRule" id="PRU00221"/>
    </source>
</evidence>
<evidence type="ECO:0000256" key="3">
    <source>
        <dbReference type="SAM" id="MobiDB-lite"/>
    </source>
</evidence>
<evidence type="ECO:0000305" key="4"/>
<protein>
    <recommendedName>
        <fullName>Protein transport protein sec31</fullName>
    </recommendedName>
</protein>
<sequence length="1263" mass="136772">MVRLREIPRTATFAWSPGAASPLIATGTRAGAVDVDFSNETCLELWDLGLSSQDASQELQPIAKIGTDSGFNDLAWTDYEDNSRGVIAGALENGSLDLWDADKLINGSSDAVISRMTKHSGAIKALQFNPKHSNLLATGGAKGELYISDLNNITNPYRLGSAAARADDIECLDWNKKVAHILVTGSSAGFVTVWDVKTRKESLTLNNMGRKAVSAVAWDPEKPTKLITSTPLESDPLIYVWDLRNSHAPERTLKGHESGVLSLSWCPQDPDLLLSSGKDNRTLCWNPQTGQAYGEFPVVTNWTFQTRWNPHNPNFFATASFDGRISIQTVQNTRTDTARAIADQNQALDGADFFAKAQTQPQVSNFSLPKAPKWLERPCGASFGFGGRVISVSLIEKGKRASKIKITPFEVDETVAKSTETFENALKEGDLRSICETRASQAASDEEKADWKVIEALISENPRKSLIEYLGFQDQDDETADKLAQLGLNKEEDEVNGKSAKESRGSGAKKHKRLQSMFDANPEADNFLSDLAASKGAKTNNPFQIFNGSETEADKGITRALLLGNFEKALDVALKEDRMSDAFMIAICGGQKCIEKAQEHYFSKQTDGPNYIRLLASIVGKNLWDVVHNADLSNWREVMAALCTFADDNEFADLCEALGDRLEEQIRNTKDKSLRKDASFCFLAGSKLEKVVAIWIEELRENEQRSIETATDDTSFSIHVRALQSLIEKVTIFRQVTNFQDTERTKDADWKLSMLYDKYIEYADVVATHGRLQVAQKYLDLVPEKHPEAEIARNRIKLAMRHATPQRSQQTVPTTRTPVNKPLPQASMYPAQPAFSAPAAAPAAATTAPRNPYAPPTAATTQPVNPYTPPSAAATQPQTSNSYAPIGGGGYTPAGYQPPQPPTYGTQPLGGSVPPPPRASNQSPATVTTYTTATNLPAWNDLPEGFTKPPTSRRGTSATAAATISSPFPNQSPTLSQGPPPPGAPPTQRAPSVPPPPKGTAPPPRVTSPPTNPPGPSSAANPYASLPQSPPMGSTMGVPPPPSIPRGPSPYNAPPSMPPPSNRYAPSPATQAASPQLSTRAPVPPPPHAAASPYTSQPGSHPPPANPYAPSTPPPSQLPMQQAPPPQATSSRPSTASSQRKAAPAPPKYPPGDRSHIPADAMPIYEILSADMQRVKSRAPSSFKAQVEDAERRLNILFDHLNNEDLLKPNTVADMAELARAIQARDYETAKTIHIDIMTNRTEECGNWMVGVKRLISMSRATP</sequence>
<reference key="1">
    <citation type="journal article" date="2005" name="Nature">
        <title>Genomic sequence of the pathogenic and allergenic filamentous fungus Aspergillus fumigatus.</title>
        <authorList>
            <person name="Nierman W.C."/>
            <person name="Pain A."/>
            <person name="Anderson M.J."/>
            <person name="Wortman J.R."/>
            <person name="Kim H.S."/>
            <person name="Arroyo J."/>
            <person name="Berriman M."/>
            <person name="Abe K."/>
            <person name="Archer D.B."/>
            <person name="Bermejo C."/>
            <person name="Bennett J.W."/>
            <person name="Bowyer P."/>
            <person name="Chen D."/>
            <person name="Collins M."/>
            <person name="Coulsen R."/>
            <person name="Davies R."/>
            <person name="Dyer P.S."/>
            <person name="Farman M.L."/>
            <person name="Fedorova N."/>
            <person name="Fedorova N.D."/>
            <person name="Feldblyum T.V."/>
            <person name="Fischer R."/>
            <person name="Fosker N."/>
            <person name="Fraser A."/>
            <person name="Garcia J.L."/>
            <person name="Garcia M.J."/>
            <person name="Goble A."/>
            <person name="Goldman G.H."/>
            <person name="Gomi K."/>
            <person name="Griffith-Jones S."/>
            <person name="Gwilliam R."/>
            <person name="Haas B.J."/>
            <person name="Haas H."/>
            <person name="Harris D.E."/>
            <person name="Horiuchi H."/>
            <person name="Huang J."/>
            <person name="Humphray S."/>
            <person name="Jimenez J."/>
            <person name="Keller N."/>
            <person name="Khouri H."/>
            <person name="Kitamoto K."/>
            <person name="Kobayashi T."/>
            <person name="Konzack S."/>
            <person name="Kulkarni R."/>
            <person name="Kumagai T."/>
            <person name="Lafton A."/>
            <person name="Latge J.-P."/>
            <person name="Li W."/>
            <person name="Lord A."/>
            <person name="Lu C."/>
            <person name="Majoros W.H."/>
            <person name="May G.S."/>
            <person name="Miller B.L."/>
            <person name="Mohamoud Y."/>
            <person name="Molina M."/>
            <person name="Monod M."/>
            <person name="Mouyna I."/>
            <person name="Mulligan S."/>
            <person name="Murphy L.D."/>
            <person name="O'Neil S."/>
            <person name="Paulsen I."/>
            <person name="Penalva M.A."/>
            <person name="Pertea M."/>
            <person name="Price C."/>
            <person name="Pritchard B.L."/>
            <person name="Quail M.A."/>
            <person name="Rabbinowitsch E."/>
            <person name="Rawlins N."/>
            <person name="Rajandream M.A."/>
            <person name="Reichard U."/>
            <person name="Renauld H."/>
            <person name="Robson G.D."/>
            <person name="Rodriguez de Cordoba S."/>
            <person name="Rodriguez-Pena J.M."/>
            <person name="Ronning C.M."/>
            <person name="Rutter S."/>
            <person name="Salzberg S.L."/>
            <person name="Sanchez M."/>
            <person name="Sanchez-Ferrero J.C."/>
            <person name="Saunders D."/>
            <person name="Seeger K."/>
            <person name="Squares R."/>
            <person name="Squares S."/>
            <person name="Takeuchi M."/>
            <person name="Tekaia F."/>
            <person name="Turner G."/>
            <person name="Vazquez de Aldana C.R."/>
            <person name="Weidman J."/>
            <person name="White O."/>
            <person name="Woodward J.R."/>
            <person name="Yu J.-H."/>
            <person name="Fraser C.M."/>
            <person name="Galagan J.E."/>
            <person name="Asai K."/>
            <person name="Machida M."/>
            <person name="Hall N."/>
            <person name="Barrell B.G."/>
            <person name="Denning D.W."/>
        </authorList>
    </citation>
    <scope>NUCLEOTIDE SEQUENCE [LARGE SCALE GENOMIC DNA]</scope>
    <source>
        <strain>ATCC MYA-4609 / CBS 101355 / FGSC A1100 / Af293</strain>
    </source>
</reference>
<dbReference type="EMBL" id="AAHF01000001">
    <property type="protein sequence ID" value="EAL93591.1"/>
    <property type="molecule type" value="Genomic_DNA"/>
</dbReference>
<dbReference type="RefSeq" id="XP_755629.1">
    <property type="nucleotide sequence ID" value="XM_750536.1"/>
</dbReference>
<dbReference type="SMR" id="Q4X0M4"/>
<dbReference type="FunCoup" id="Q4X0M4">
    <property type="interactions" value="734"/>
</dbReference>
<dbReference type="STRING" id="330879.Q4X0M4"/>
<dbReference type="EnsemblFungi" id="EAL93591">
    <property type="protein sequence ID" value="EAL93591"/>
    <property type="gene ID" value="AFUA_2G12980"/>
</dbReference>
<dbReference type="GeneID" id="3512865"/>
<dbReference type="KEGG" id="afm:AFUA_2G12980"/>
<dbReference type="VEuPathDB" id="FungiDB:Afu2g12980"/>
<dbReference type="eggNOG" id="KOG0307">
    <property type="taxonomic scope" value="Eukaryota"/>
</dbReference>
<dbReference type="HOGENOM" id="CLU_003033_2_0_1"/>
<dbReference type="InParanoid" id="Q4X0M4"/>
<dbReference type="OMA" id="WLERPCG"/>
<dbReference type="OrthoDB" id="542917at2759"/>
<dbReference type="PHI-base" id="PHI:2527"/>
<dbReference type="Proteomes" id="UP000002530">
    <property type="component" value="Chromosome 2"/>
</dbReference>
<dbReference type="GO" id="GO:0030127">
    <property type="term" value="C:COPII vesicle coat"/>
    <property type="evidence" value="ECO:0000318"/>
    <property type="project" value="GO_Central"/>
</dbReference>
<dbReference type="GO" id="GO:0070971">
    <property type="term" value="C:endoplasmic reticulum exit site"/>
    <property type="evidence" value="ECO:0000318"/>
    <property type="project" value="GO_Central"/>
</dbReference>
<dbReference type="GO" id="GO:0005789">
    <property type="term" value="C:endoplasmic reticulum membrane"/>
    <property type="evidence" value="ECO:0007669"/>
    <property type="project" value="UniProtKB-SubCell"/>
</dbReference>
<dbReference type="GO" id="GO:0005198">
    <property type="term" value="F:structural molecule activity"/>
    <property type="evidence" value="ECO:0000318"/>
    <property type="project" value="GO_Central"/>
</dbReference>
<dbReference type="GO" id="GO:0090110">
    <property type="term" value="P:COPII-coated vesicle cargo loading"/>
    <property type="evidence" value="ECO:0000318"/>
    <property type="project" value="GO_Central"/>
</dbReference>
<dbReference type="GO" id="GO:0007029">
    <property type="term" value="P:endoplasmic reticulum organization"/>
    <property type="evidence" value="ECO:0000318"/>
    <property type="project" value="GO_Central"/>
</dbReference>
<dbReference type="GO" id="GO:0015031">
    <property type="term" value="P:protein transport"/>
    <property type="evidence" value="ECO:0007669"/>
    <property type="project" value="UniProtKB-KW"/>
</dbReference>
<dbReference type="FunFam" id="1.20.940.10:FF:000007">
    <property type="entry name" value="Protein transport protein (SEC31), putative"/>
    <property type="match status" value="1"/>
</dbReference>
<dbReference type="FunFam" id="2.130.10.10:FF:000193">
    <property type="entry name" value="Protein transport protein SEC31, putative"/>
    <property type="match status" value="1"/>
</dbReference>
<dbReference type="Gene3D" id="1.25.40.1030">
    <property type="match status" value="1"/>
</dbReference>
<dbReference type="Gene3D" id="1.20.940.10">
    <property type="entry name" value="Functional domain of the splicing factor Prp18"/>
    <property type="match status" value="1"/>
</dbReference>
<dbReference type="Gene3D" id="2.130.10.10">
    <property type="entry name" value="YVTN repeat-like/Quinoprotein amine dehydrogenase"/>
    <property type="match status" value="1"/>
</dbReference>
<dbReference type="InterPro" id="IPR040251">
    <property type="entry name" value="SEC31-like"/>
</dbReference>
<dbReference type="InterPro" id="IPR015943">
    <property type="entry name" value="WD40/YVTN_repeat-like_dom_sf"/>
</dbReference>
<dbReference type="InterPro" id="IPR036322">
    <property type="entry name" value="WD40_repeat_dom_sf"/>
</dbReference>
<dbReference type="InterPro" id="IPR001680">
    <property type="entry name" value="WD40_rpt"/>
</dbReference>
<dbReference type="PANTHER" id="PTHR13923">
    <property type="entry name" value="SEC31-RELATED PROTEIN"/>
    <property type="match status" value="1"/>
</dbReference>
<dbReference type="PANTHER" id="PTHR13923:SF11">
    <property type="entry name" value="SECRETORY 31, ISOFORM D"/>
    <property type="match status" value="1"/>
</dbReference>
<dbReference type="Pfam" id="PF00400">
    <property type="entry name" value="WD40"/>
    <property type="match status" value="1"/>
</dbReference>
<dbReference type="SMART" id="SM00320">
    <property type="entry name" value="WD40"/>
    <property type="match status" value="6"/>
</dbReference>
<dbReference type="SUPFAM" id="SSF50978">
    <property type="entry name" value="WD40 repeat-like"/>
    <property type="match status" value="1"/>
</dbReference>
<dbReference type="PROSITE" id="PS50082">
    <property type="entry name" value="WD_REPEATS_2"/>
    <property type="match status" value="2"/>
</dbReference>
<dbReference type="PROSITE" id="PS50294">
    <property type="entry name" value="WD_REPEATS_REGION"/>
    <property type="match status" value="1"/>
</dbReference>
<feature type="chain" id="PRO_0000295429" description="Protein transport protein sec31">
    <location>
        <begin position="1"/>
        <end position="1263"/>
    </location>
</feature>
<feature type="repeat" description="WD 1">
    <location>
        <begin position="5"/>
        <end position="47"/>
    </location>
</feature>
<feature type="repeat" description="WD 2">
    <location>
        <begin position="66"/>
        <end position="109"/>
    </location>
</feature>
<feature type="repeat" description="WD 3">
    <location>
        <begin position="118"/>
        <end position="158"/>
    </location>
</feature>
<feature type="repeat" description="WD 4">
    <location>
        <begin position="164"/>
        <end position="204"/>
    </location>
</feature>
<feature type="repeat" description="WD 5">
    <location>
        <begin position="208"/>
        <end position="251"/>
    </location>
</feature>
<feature type="repeat" description="WD 6">
    <location>
        <begin position="255"/>
        <end position="295"/>
    </location>
</feature>
<feature type="repeat" description="WD 7">
    <location>
        <begin position="298"/>
        <end position="338"/>
    </location>
</feature>
<feature type="repeat" description="WD 8; interaction with sec13" evidence="2">
    <location>
        <begin position="382"/>
        <end position="407"/>
    </location>
</feature>
<feature type="region of interest" description="Disordered" evidence="3">
    <location>
        <begin position="487"/>
        <end position="510"/>
    </location>
</feature>
<feature type="region of interest" description="Disordered" evidence="3">
    <location>
        <begin position="801"/>
        <end position="1158"/>
    </location>
</feature>
<feature type="compositionally biased region" description="Basic and acidic residues" evidence="3">
    <location>
        <begin position="495"/>
        <end position="504"/>
    </location>
</feature>
<feature type="compositionally biased region" description="Polar residues" evidence="3">
    <location>
        <begin position="805"/>
        <end position="818"/>
    </location>
</feature>
<feature type="compositionally biased region" description="Low complexity" evidence="3">
    <location>
        <begin position="830"/>
        <end position="863"/>
    </location>
</feature>
<feature type="compositionally biased region" description="Polar residues" evidence="3">
    <location>
        <begin position="873"/>
        <end position="883"/>
    </location>
</feature>
<feature type="compositionally biased region" description="Low complexity" evidence="3">
    <location>
        <begin position="925"/>
        <end position="934"/>
    </location>
</feature>
<feature type="compositionally biased region" description="Low complexity" evidence="3">
    <location>
        <begin position="952"/>
        <end position="977"/>
    </location>
</feature>
<feature type="compositionally biased region" description="Pro residues" evidence="3">
    <location>
        <begin position="992"/>
        <end position="1016"/>
    </location>
</feature>
<feature type="compositionally biased region" description="Pro residues" evidence="3">
    <location>
        <begin position="1038"/>
        <end position="1061"/>
    </location>
</feature>
<feature type="compositionally biased region" description="Low complexity" evidence="3">
    <location>
        <begin position="1062"/>
        <end position="1076"/>
    </location>
</feature>
<feature type="compositionally biased region" description="Pro residues" evidence="3">
    <location>
        <begin position="1100"/>
        <end position="1127"/>
    </location>
</feature>
<feature type="compositionally biased region" description="Low complexity" evidence="3">
    <location>
        <begin position="1128"/>
        <end position="1143"/>
    </location>
</feature>